<gene>
    <name evidence="1" type="primary">menH</name>
    <name type="ordered locus">UTI89_C2547</name>
</gene>
<dbReference type="EC" id="4.2.99.20" evidence="1"/>
<dbReference type="EMBL" id="CP000243">
    <property type="protein sequence ID" value="ABE08014.1"/>
    <property type="molecule type" value="Genomic_DNA"/>
</dbReference>
<dbReference type="RefSeq" id="WP_000600529.1">
    <property type="nucleotide sequence ID" value="NZ_CP064825.1"/>
</dbReference>
<dbReference type="SMR" id="Q1R9F0"/>
<dbReference type="ESTHER" id="ecoli-YFBB">
    <property type="family name" value="MenH_SHCHC"/>
</dbReference>
<dbReference type="MEROPS" id="S33.996"/>
<dbReference type="KEGG" id="eci:UTI89_C2547"/>
<dbReference type="HOGENOM" id="CLU_020336_38_2_6"/>
<dbReference type="UniPathway" id="UPA00079"/>
<dbReference type="UniPathway" id="UPA01057">
    <property type="reaction ID" value="UER00900"/>
</dbReference>
<dbReference type="Proteomes" id="UP000001952">
    <property type="component" value="Chromosome"/>
</dbReference>
<dbReference type="GO" id="GO:0070205">
    <property type="term" value="F:2-succinyl-6-hydroxy-2,4-cyclohexadiene-1-carboxylate synthase activity"/>
    <property type="evidence" value="ECO:0007669"/>
    <property type="project" value="UniProtKB-UniRule"/>
</dbReference>
<dbReference type="GO" id="GO:0009234">
    <property type="term" value="P:menaquinone biosynthetic process"/>
    <property type="evidence" value="ECO:0007669"/>
    <property type="project" value="UniProtKB-UniRule"/>
</dbReference>
<dbReference type="FunFam" id="3.40.50.1820:FF:000038">
    <property type="entry name" value="2-succinyl-6-hydroxy-2,4-cyclohexadiene-1-carboxylate synthase"/>
    <property type="match status" value="1"/>
</dbReference>
<dbReference type="Gene3D" id="3.40.50.1820">
    <property type="entry name" value="alpha/beta hydrolase"/>
    <property type="match status" value="1"/>
</dbReference>
<dbReference type="HAMAP" id="MF_01660">
    <property type="entry name" value="MenH"/>
    <property type="match status" value="1"/>
</dbReference>
<dbReference type="InterPro" id="IPR000073">
    <property type="entry name" value="AB_hydrolase_1"/>
</dbReference>
<dbReference type="InterPro" id="IPR029058">
    <property type="entry name" value="AB_hydrolase_fold"/>
</dbReference>
<dbReference type="InterPro" id="IPR022485">
    <property type="entry name" value="SHCHC_synthase_MenH"/>
</dbReference>
<dbReference type="NCBIfam" id="TIGR03695">
    <property type="entry name" value="menH_SHCHC"/>
    <property type="match status" value="1"/>
</dbReference>
<dbReference type="NCBIfam" id="NF008340">
    <property type="entry name" value="PRK11126.1"/>
    <property type="match status" value="1"/>
</dbReference>
<dbReference type="PANTHER" id="PTHR42916">
    <property type="entry name" value="2-SUCCINYL-5-ENOLPYRUVYL-6-HYDROXY-3-CYCLOHEXENE-1-CARBOXYLATE SYNTHASE"/>
    <property type="match status" value="1"/>
</dbReference>
<dbReference type="PANTHER" id="PTHR42916:SF1">
    <property type="entry name" value="PROTEIN PHYLLO, CHLOROPLASTIC"/>
    <property type="match status" value="1"/>
</dbReference>
<dbReference type="Pfam" id="PF12697">
    <property type="entry name" value="Abhydrolase_6"/>
    <property type="match status" value="1"/>
</dbReference>
<dbReference type="SUPFAM" id="SSF53474">
    <property type="entry name" value="alpha/beta-Hydrolases"/>
    <property type="match status" value="1"/>
</dbReference>
<evidence type="ECO:0000255" key="1">
    <source>
        <dbReference type="HAMAP-Rule" id="MF_01660"/>
    </source>
</evidence>
<reference key="1">
    <citation type="journal article" date="2006" name="Proc. Natl. Acad. Sci. U.S.A.">
        <title>Identification of genes subject to positive selection in uropathogenic strains of Escherichia coli: a comparative genomics approach.</title>
        <authorList>
            <person name="Chen S.L."/>
            <person name="Hung C.-S."/>
            <person name="Xu J."/>
            <person name="Reigstad C.S."/>
            <person name="Magrini V."/>
            <person name="Sabo A."/>
            <person name="Blasiar D."/>
            <person name="Bieri T."/>
            <person name="Meyer R.R."/>
            <person name="Ozersky P."/>
            <person name="Armstrong J.R."/>
            <person name="Fulton R.S."/>
            <person name="Latreille J.P."/>
            <person name="Spieth J."/>
            <person name="Hooton T.M."/>
            <person name="Mardis E.R."/>
            <person name="Hultgren S.J."/>
            <person name="Gordon J.I."/>
        </authorList>
    </citation>
    <scope>NUCLEOTIDE SEQUENCE [LARGE SCALE GENOMIC DNA]</scope>
    <source>
        <strain>UTI89 / UPEC</strain>
    </source>
</reference>
<name>MENH_ECOUT</name>
<accession>Q1R9F0</accession>
<proteinExistence type="inferred from homology"/>
<protein>
    <recommendedName>
        <fullName evidence="1">2-succinyl-6-hydroxy-2,4-cyclohexadiene-1-carboxylate synthase</fullName>
        <shortName evidence="1">SHCHC synthase</shortName>
        <ecNumber evidence="1">4.2.99.20</ecNumber>
    </recommendedName>
</protein>
<organism>
    <name type="scientific">Escherichia coli (strain UTI89 / UPEC)</name>
    <dbReference type="NCBI Taxonomy" id="364106"/>
    <lineage>
        <taxon>Bacteria</taxon>
        <taxon>Pseudomonadati</taxon>
        <taxon>Pseudomonadota</taxon>
        <taxon>Gammaproteobacteria</taxon>
        <taxon>Enterobacterales</taxon>
        <taxon>Enterobacteriaceae</taxon>
        <taxon>Escherichia</taxon>
    </lineage>
</organism>
<feature type="chain" id="PRO_0000341908" description="2-succinyl-6-hydroxy-2,4-cyclohexadiene-1-carboxylate synthase">
    <location>
        <begin position="1"/>
        <end position="252"/>
    </location>
</feature>
<keyword id="KW-0456">Lyase</keyword>
<keyword id="KW-0474">Menaquinone biosynthesis</keyword>
<sequence length="252" mass="27657">MILHAQAKHGKPGLPWLVFLHGFSGDCHEWQEVGEAFADYSRLYVDLPGHGGSATISVDGFDDVTGLLCKTLVSYNILNFWLVGYSLGGRVAMMAACQEPAGLCGVVVEGGHPGLQNAEQRAERQRSDRQWAQRFRTEPLTAVFADWYQQPVFASLNDDQRRELVALRSNNNGATLAAMLEATSLAVQPDLRANLSARTFAFYYLCGERDSKFRALAAELAADCHVIPRAGHNAHRENPAGVIASLAQILRF</sequence>
<comment type="function">
    <text evidence="1">Catalyzes a proton abstraction reaction that results in 2,5-elimination of pyruvate from 2-succinyl-5-enolpyruvyl-6-hydroxy-3-cyclohexene-1-carboxylate (SEPHCHC) and the formation of 2-succinyl-6-hydroxy-2,4-cyclohexadiene-1-carboxylate (SHCHC).</text>
</comment>
<comment type="catalytic activity">
    <reaction evidence="1">
        <text>5-enolpyruvoyl-6-hydroxy-2-succinyl-cyclohex-3-ene-1-carboxylate = (1R,6R)-6-hydroxy-2-succinyl-cyclohexa-2,4-diene-1-carboxylate + pyruvate</text>
        <dbReference type="Rhea" id="RHEA:25597"/>
        <dbReference type="ChEBI" id="CHEBI:15361"/>
        <dbReference type="ChEBI" id="CHEBI:58689"/>
        <dbReference type="ChEBI" id="CHEBI:58818"/>
        <dbReference type="EC" id="4.2.99.20"/>
    </reaction>
</comment>
<comment type="pathway">
    <text evidence="1">Quinol/quinone metabolism; 1,4-dihydroxy-2-naphthoate biosynthesis; 1,4-dihydroxy-2-naphthoate from chorismate: step 3/7.</text>
</comment>
<comment type="pathway">
    <text evidence="1">Quinol/quinone metabolism; menaquinone biosynthesis.</text>
</comment>
<comment type="subunit">
    <text evidence="1">Monomer.</text>
</comment>
<comment type="similarity">
    <text evidence="1">Belongs to the AB hydrolase superfamily. MenH family.</text>
</comment>